<protein>
    <recommendedName>
        <fullName evidence="9">Multiphosphoryl transfer protein 2</fullName>
        <shortName evidence="9">MTP 2</shortName>
    </recommendedName>
    <alternativeName>
        <fullName evidence="4">Triphosphoryl transfer protein 2</fullName>
        <shortName evidence="4">TTP 2</shortName>
    </alternativeName>
    <domain>
        <recommendedName>
            <fullName evidence="7">Phosphoenolpyruvate-protein phosphotransferase</fullName>
            <ecNumber evidence="1">2.7.3.9</ecNumber>
        </recommendedName>
        <alternativeName>
            <fullName evidence="7">Enzyme I-Ani</fullName>
        </alternativeName>
        <alternativeName>
            <fullName evidence="7">Phosphotransferase system enzyme I</fullName>
        </alternativeName>
    </domain>
    <domain>
        <recommendedName>
            <fullName evidence="4">Phosphocarrier protein HPr</fullName>
            <shortName evidence="4">Protein H</shortName>
        </recommendedName>
    </domain>
    <domain>
        <recommendedName>
            <fullName evidence="7">PTS system fructose-like EIIA component</fullName>
            <ecNumber evidence="2">2.7.1.202</ecNumber>
        </recommendedName>
        <alternativeName>
            <fullName evidence="7">Fructose-like phosphotransferase enzyme IIA component</fullName>
        </alternativeName>
    </domain>
</protein>
<proteinExistence type="inferred from homology"/>
<gene>
    <name evidence="7" type="primary">ptsA</name>
    <name type="synonym">frwA</name>
    <name type="synonym">yijH</name>
    <name type="ordered locus">b3947</name>
    <name type="ordered locus">JW5555</name>
</gene>
<name>PTFX2_ECOLI</name>
<comment type="function">
    <text evidence="9">Multifunctional protein that includes general (non sugar-specific) and sugar-specific components of the phosphoenolpyruvate-dependent sugar phosphotransferase system (sugar PTS). This major carbohydrate active transport system catalyzes the phosphorylation of incoming sugar substrates concomitantly with their translocation across the cell membrane. The enzyme II FrwABC PTS system is involved in fructose transport.</text>
</comment>
<comment type="catalytic activity">
    <reaction evidence="1">
        <text>L-histidyl-[protein] + phosphoenolpyruvate = N(pros)-phospho-L-histidyl-[protein] + pyruvate</text>
        <dbReference type="Rhea" id="RHEA:23880"/>
        <dbReference type="Rhea" id="RHEA-COMP:9745"/>
        <dbReference type="Rhea" id="RHEA-COMP:9746"/>
        <dbReference type="ChEBI" id="CHEBI:15361"/>
        <dbReference type="ChEBI" id="CHEBI:29979"/>
        <dbReference type="ChEBI" id="CHEBI:58702"/>
        <dbReference type="ChEBI" id="CHEBI:64837"/>
        <dbReference type="EC" id="2.7.3.9"/>
    </reaction>
</comment>
<comment type="catalytic activity">
    <reaction evidence="2">
        <text>D-fructose(out) + N(pros)-phospho-L-histidyl-[protein] = D-fructose 1-phosphate(in) + L-histidyl-[protein]</text>
        <dbReference type="Rhea" id="RHEA:49252"/>
        <dbReference type="Rhea" id="RHEA-COMP:9745"/>
        <dbReference type="Rhea" id="RHEA-COMP:9746"/>
        <dbReference type="ChEBI" id="CHEBI:29979"/>
        <dbReference type="ChEBI" id="CHEBI:37721"/>
        <dbReference type="ChEBI" id="CHEBI:58674"/>
        <dbReference type="ChEBI" id="CHEBI:64837"/>
        <dbReference type="EC" id="2.7.1.202"/>
    </reaction>
</comment>
<comment type="cofactor">
    <cofactor evidence="1">
        <name>Mg(2+)</name>
        <dbReference type="ChEBI" id="CHEBI:18420"/>
    </cofactor>
</comment>
<comment type="subcellular location">
    <subcellularLocation>
        <location evidence="8">Cytoplasm</location>
    </subcellularLocation>
</comment>
<comment type="domain">
    <text evidence="5">The PTS EIIA type-2 domain is phosphorylated by phospho-HPr on a histidyl residue. Then, it transfers the phosphoryl group to the PTS EIIB type-2 domain.</text>
</comment>
<comment type="domain">
    <text evidence="8">In contrast to classical PTS systems, the fructose-like PTS has no requirement for HPr and Enzyme I; PtsA combines a IIA domain with an Enzyme I and a HPr domains.</text>
</comment>
<comment type="similarity">
    <text evidence="8">Belongs to the PEP-utilizing enzyme family.</text>
</comment>
<comment type="sequence caution" evidence="8">
    <conflict type="frameshift">
        <sequence resource="EMBL-CDS" id="AAC43053"/>
    </conflict>
</comment>
<sequence length="833" mass="91774">MALIVEFICELPNGVHARPASHVETLCNTFSSQIEWHNLRTDRKGNAKSALALIGTDTLAGDNCQLLISGADEQEAHQRLSQWLRDEFPHCDAPLAEVKSDELEPLPVSLTNLNPQIIRARTVCSGSAGGILTPISSLDLNALGNLPAAKGVDAEQSALENGLTLVLKNIEFRLLDSDGATSAILEAHRSLAGDTSLREHLLAGVSAGLSCAEAIVASANHFCEEFSRSSSSYLQERALDVRDVCFQLLQQIYGEQRFPAPGKLTQPAICMADELTPSQFLELDKNHLKGLLLKSGGTTSHTVILARSFNIPTLVGVDIDALTPWQQQTIYIDGNAGAIVVEPGEAVARYYQQEARVQDALREQQRVWLTQQARTADGIRIEIAANIAHSVEAQAAFGNGAEGVGLFRTEMLYMDRTSAPGESELYNIFCQALESANGRSIIVRTMDIGGDKPVDYLNIPAEANPFLGYRAVRIYEEYASLFTTQLRSILRASAHGSLKIMIPMISSMEEILWVKEKLAEAKQQLRNEHIPFDEKIQLGIMLEVPSVMFIIDQCCEEIDFFSIGSNDLTQYLLAVDRDNAKVTRHYNSLNPAFLRALDYAVQAVHRQGKWIGLCGELGAKGSVLPLLVGLGLDELSMSAPSIPAAKARMAQLDSRECRKLLNQAMACRTSLEVEHLLAQFRMTQQDAPLVTAECITLESDWRSKEEVLKGMTDNLLLAGRCRYPRKLEADLWAREAVFSTGLGFSFAIPHSKSEHIEQSTISVARLQAPVRWGDDEAQFIIMLTLNKHAAGDQHMRIFSRLARRIMHEEFRNALVNAASADAIASLLQHELEL</sequence>
<keyword id="KW-0963">Cytoplasm</keyword>
<keyword id="KW-0418">Kinase</keyword>
<keyword id="KW-0460">Magnesium</keyword>
<keyword id="KW-0479">Metal-binding</keyword>
<keyword id="KW-0597">Phosphoprotein</keyword>
<keyword id="KW-0598">Phosphotransferase system</keyword>
<keyword id="KW-1185">Reference proteome</keyword>
<keyword id="KW-0762">Sugar transport</keyword>
<keyword id="KW-0808">Transferase</keyword>
<keyword id="KW-0813">Transport</keyword>
<dbReference type="EC" id="2.7.3.9" evidence="1"/>
<dbReference type="EC" id="2.7.1.202" evidence="2"/>
<dbReference type="EMBL" id="U00006">
    <property type="protein sequence ID" value="AAC43053.1"/>
    <property type="status" value="ALT_FRAME"/>
    <property type="molecule type" value="Genomic_DNA"/>
</dbReference>
<dbReference type="EMBL" id="U00096">
    <property type="protein sequence ID" value="AAT48236.1"/>
    <property type="molecule type" value="Genomic_DNA"/>
</dbReference>
<dbReference type="EMBL" id="AP009048">
    <property type="protein sequence ID" value="BAE77363.1"/>
    <property type="molecule type" value="Genomic_DNA"/>
</dbReference>
<dbReference type="RefSeq" id="YP_026278.1">
    <property type="nucleotide sequence ID" value="NC_000913.3"/>
</dbReference>
<dbReference type="SMR" id="P32670"/>
<dbReference type="BioGRID" id="4262062">
    <property type="interactions" value="14"/>
</dbReference>
<dbReference type="ComplexPortal" id="CPX-5994">
    <property type="entry name" value="Frw fuctose-like enzyme II complex"/>
</dbReference>
<dbReference type="DIP" id="DIP-10601N"/>
<dbReference type="FunCoup" id="P32670">
    <property type="interactions" value="35"/>
</dbReference>
<dbReference type="STRING" id="511145.b3947"/>
<dbReference type="TCDB" id="4.A.2.1.10">
    <property type="family name" value="the pts fructose-mannitol (fru) family"/>
</dbReference>
<dbReference type="jPOST" id="P32670"/>
<dbReference type="PaxDb" id="511145-b3947"/>
<dbReference type="EnsemblBacteria" id="AAT48236">
    <property type="protein sequence ID" value="AAT48236"/>
    <property type="gene ID" value="b3947"/>
</dbReference>
<dbReference type="GeneID" id="948437"/>
<dbReference type="KEGG" id="ecj:JW5555"/>
<dbReference type="KEGG" id="eco:b3947"/>
<dbReference type="KEGG" id="ecoc:C3026_21335"/>
<dbReference type="PATRIC" id="fig|511145.12.peg.4069"/>
<dbReference type="EchoBASE" id="EB1851"/>
<dbReference type="eggNOG" id="COG1080">
    <property type="taxonomic scope" value="Bacteria"/>
</dbReference>
<dbReference type="eggNOG" id="COG1762">
    <property type="taxonomic scope" value="Bacteria"/>
</dbReference>
<dbReference type="eggNOG" id="COG1925">
    <property type="taxonomic scope" value="Bacteria"/>
</dbReference>
<dbReference type="HOGENOM" id="CLU_007308_5_0_6"/>
<dbReference type="InParanoid" id="P32670"/>
<dbReference type="OMA" id="QHIYGEQ"/>
<dbReference type="OrthoDB" id="9765468at2"/>
<dbReference type="PhylomeDB" id="P32670"/>
<dbReference type="BioCyc" id="EcoCyc:EG11906-MONOMER"/>
<dbReference type="PRO" id="PR:P32670"/>
<dbReference type="Proteomes" id="UP000000625">
    <property type="component" value="Chromosome"/>
</dbReference>
<dbReference type="GO" id="GO:0005737">
    <property type="term" value="C:cytoplasm"/>
    <property type="evidence" value="ECO:0007669"/>
    <property type="project" value="UniProtKB-SubCell"/>
</dbReference>
<dbReference type="GO" id="GO:1902495">
    <property type="term" value="C:transmembrane transporter complex"/>
    <property type="evidence" value="ECO:0000303"/>
    <property type="project" value="ComplexPortal"/>
</dbReference>
<dbReference type="GO" id="GO:0016301">
    <property type="term" value="F:kinase activity"/>
    <property type="evidence" value="ECO:0007669"/>
    <property type="project" value="UniProtKB-KW"/>
</dbReference>
<dbReference type="GO" id="GO:0046872">
    <property type="term" value="F:metal ion binding"/>
    <property type="evidence" value="ECO:0007669"/>
    <property type="project" value="UniProtKB-KW"/>
</dbReference>
<dbReference type="GO" id="GO:0008965">
    <property type="term" value="F:phosphoenolpyruvate-protein phosphotransferase activity"/>
    <property type="evidence" value="ECO:0000318"/>
    <property type="project" value="GO_Central"/>
</dbReference>
<dbReference type="GO" id="GO:1990539">
    <property type="term" value="P:fructose import across plasma membrane"/>
    <property type="evidence" value="ECO:0000303"/>
    <property type="project" value="ComplexPortal"/>
</dbReference>
<dbReference type="GO" id="GO:0015764">
    <property type="term" value="P:N-acetylglucosamine transport"/>
    <property type="evidence" value="ECO:0000318"/>
    <property type="project" value="GO_Central"/>
</dbReference>
<dbReference type="GO" id="GO:0009401">
    <property type="term" value="P:phosphoenolpyruvate-dependent sugar phosphotransferase system"/>
    <property type="evidence" value="ECO:0000303"/>
    <property type="project" value="ComplexPortal"/>
</dbReference>
<dbReference type="CDD" id="cd00367">
    <property type="entry name" value="PTS-HPr_like"/>
    <property type="match status" value="1"/>
</dbReference>
<dbReference type="CDD" id="cd00211">
    <property type="entry name" value="PTS_IIA_fru"/>
    <property type="match status" value="1"/>
</dbReference>
<dbReference type="Gene3D" id="3.30.1340.10">
    <property type="entry name" value="HPr-like"/>
    <property type="match status" value="1"/>
</dbReference>
<dbReference type="Gene3D" id="3.40.930.10">
    <property type="entry name" value="Mannitol-specific EII, Chain A"/>
    <property type="match status" value="1"/>
</dbReference>
<dbReference type="Gene3D" id="3.20.20.60">
    <property type="entry name" value="Phosphoenolpyruvate-binding domains"/>
    <property type="match status" value="1"/>
</dbReference>
<dbReference type="Gene3D" id="3.50.30.10">
    <property type="entry name" value="Phosphohistidine domain"/>
    <property type="match status" value="1"/>
</dbReference>
<dbReference type="Gene3D" id="1.10.274.10">
    <property type="entry name" value="PtsI, HPr-binding domain"/>
    <property type="match status" value="1"/>
</dbReference>
<dbReference type="InterPro" id="IPR000032">
    <property type="entry name" value="HPr-like"/>
</dbReference>
<dbReference type="InterPro" id="IPR035895">
    <property type="entry name" value="HPr-like_sf"/>
</dbReference>
<dbReference type="InterPro" id="IPR008279">
    <property type="entry name" value="PEP-util_enz_mobile_dom"/>
</dbReference>
<dbReference type="InterPro" id="IPR050499">
    <property type="entry name" value="PEP-utilizing_PTS_enzyme"/>
</dbReference>
<dbReference type="InterPro" id="IPR018274">
    <property type="entry name" value="PEP_util_AS"/>
</dbReference>
<dbReference type="InterPro" id="IPR000121">
    <property type="entry name" value="PEP_util_C"/>
</dbReference>
<dbReference type="InterPro" id="IPR023151">
    <property type="entry name" value="PEP_util_CS"/>
</dbReference>
<dbReference type="InterPro" id="IPR036637">
    <property type="entry name" value="Phosphohistidine_dom_sf"/>
</dbReference>
<dbReference type="InterPro" id="IPR016152">
    <property type="entry name" value="PTrfase/Anion_transptr"/>
</dbReference>
<dbReference type="InterPro" id="IPR006318">
    <property type="entry name" value="PTS_EI-like"/>
</dbReference>
<dbReference type="InterPro" id="IPR002178">
    <property type="entry name" value="PTS_EIIA_type-2_dom"/>
</dbReference>
<dbReference type="InterPro" id="IPR008731">
    <property type="entry name" value="PTS_EIN"/>
</dbReference>
<dbReference type="InterPro" id="IPR001020">
    <property type="entry name" value="PTS_HPr_His_P_site"/>
</dbReference>
<dbReference type="InterPro" id="IPR036618">
    <property type="entry name" value="PtsI_HPr-bd_sf"/>
</dbReference>
<dbReference type="InterPro" id="IPR015813">
    <property type="entry name" value="Pyrv/PenolPyrv_kinase-like_dom"/>
</dbReference>
<dbReference type="InterPro" id="IPR040442">
    <property type="entry name" value="Pyrv_kinase-like_dom_sf"/>
</dbReference>
<dbReference type="NCBIfam" id="TIGR01417">
    <property type="entry name" value="PTS_I_fam"/>
    <property type="match status" value="1"/>
</dbReference>
<dbReference type="PANTHER" id="PTHR46244:SF4">
    <property type="entry name" value="MULTIPHOSPHORYL TRANSFER PROTEIN 1-RELATED"/>
    <property type="match status" value="1"/>
</dbReference>
<dbReference type="PANTHER" id="PTHR46244">
    <property type="entry name" value="PHOSPHOENOLPYRUVATE-PROTEIN PHOSPHOTRANSFERASE"/>
    <property type="match status" value="1"/>
</dbReference>
<dbReference type="Pfam" id="PF05524">
    <property type="entry name" value="PEP-utilisers_N"/>
    <property type="match status" value="1"/>
</dbReference>
<dbReference type="Pfam" id="PF00391">
    <property type="entry name" value="PEP-utilizers"/>
    <property type="match status" value="1"/>
</dbReference>
<dbReference type="Pfam" id="PF02896">
    <property type="entry name" value="PEP-utilizers_C"/>
    <property type="match status" value="1"/>
</dbReference>
<dbReference type="Pfam" id="PF00381">
    <property type="entry name" value="PTS-HPr"/>
    <property type="match status" value="1"/>
</dbReference>
<dbReference type="Pfam" id="PF00359">
    <property type="entry name" value="PTS_EIIA_2"/>
    <property type="match status" value="1"/>
</dbReference>
<dbReference type="PRINTS" id="PR01736">
    <property type="entry name" value="PHPHTRNFRASE"/>
</dbReference>
<dbReference type="SUPFAM" id="SSF47831">
    <property type="entry name" value="Enzyme I of the PEP:sugar phosphotransferase system HPr-binding (sub)domain"/>
    <property type="match status" value="1"/>
</dbReference>
<dbReference type="SUPFAM" id="SSF55594">
    <property type="entry name" value="HPr-like"/>
    <property type="match status" value="1"/>
</dbReference>
<dbReference type="SUPFAM" id="SSF55804">
    <property type="entry name" value="Phoshotransferase/anion transport protein"/>
    <property type="match status" value="1"/>
</dbReference>
<dbReference type="SUPFAM" id="SSF51621">
    <property type="entry name" value="Phosphoenolpyruvate/pyruvate domain"/>
    <property type="match status" value="1"/>
</dbReference>
<dbReference type="SUPFAM" id="SSF52009">
    <property type="entry name" value="Phosphohistidine domain"/>
    <property type="match status" value="1"/>
</dbReference>
<dbReference type="PROSITE" id="PS00742">
    <property type="entry name" value="PEP_ENZYMES_2"/>
    <property type="match status" value="1"/>
</dbReference>
<dbReference type="PROSITE" id="PS00370">
    <property type="entry name" value="PEP_ENZYMES_PHOS_SITE"/>
    <property type="match status" value="1"/>
</dbReference>
<dbReference type="PROSITE" id="PS51094">
    <property type="entry name" value="PTS_EIIA_TYPE_2"/>
    <property type="match status" value="1"/>
</dbReference>
<dbReference type="PROSITE" id="PS51350">
    <property type="entry name" value="PTS_HPR_DOM"/>
    <property type="match status" value="1"/>
</dbReference>
<dbReference type="PROSITE" id="PS00369">
    <property type="entry name" value="PTS_HPR_HIS"/>
    <property type="match status" value="1"/>
</dbReference>
<organism>
    <name type="scientific">Escherichia coli (strain K12)</name>
    <dbReference type="NCBI Taxonomy" id="83333"/>
    <lineage>
        <taxon>Bacteria</taxon>
        <taxon>Pseudomonadati</taxon>
        <taxon>Pseudomonadota</taxon>
        <taxon>Gammaproteobacteria</taxon>
        <taxon>Enterobacterales</taxon>
        <taxon>Enterobacteriaceae</taxon>
        <taxon>Escherichia</taxon>
    </lineage>
</organism>
<feature type="chain" id="PRO_0000147094" description="Multiphosphoryl transfer protein 2">
    <location>
        <begin position="1"/>
        <end position="833"/>
    </location>
</feature>
<feature type="domain" description="HPr" evidence="6">
    <location>
        <begin position="2"/>
        <end position="91"/>
    </location>
</feature>
<feature type="domain" description="PTS EIIA type-2" evidence="5">
    <location>
        <begin position="688"/>
        <end position="830"/>
    </location>
</feature>
<feature type="region of interest" description="PTS EI" evidence="9">
    <location>
        <begin position="143"/>
        <end position="653"/>
    </location>
</feature>
<feature type="active site" description="Tele-phosphohistidine intermediate; for HPr activity" evidence="5">
    <location>
        <position position="16"/>
    </location>
</feature>
<feature type="active site" description="Tele-phosphohistidine intermediate; for PTS EI activity" evidence="1 5">
    <location>
        <position position="301"/>
    </location>
</feature>
<feature type="active site" description="Proton donor; for EI activity" evidence="1">
    <location>
        <position position="614"/>
    </location>
</feature>
<feature type="active site" description="Tele-phosphohistidine intermediate; for PTS EIIA activity" evidence="5">
    <location>
        <position position="750"/>
    </location>
</feature>
<feature type="binding site" evidence="3">
    <location>
        <position position="408"/>
    </location>
    <ligand>
        <name>phosphoenolpyruvate</name>
        <dbReference type="ChEBI" id="CHEBI:58702"/>
    </ligand>
</feature>
<feature type="binding site" evidence="1">
    <location>
        <position position="444"/>
    </location>
    <ligand>
        <name>phosphoenolpyruvate</name>
        <dbReference type="ChEBI" id="CHEBI:58702"/>
    </ligand>
</feature>
<feature type="binding site" evidence="1">
    <location>
        <position position="543"/>
    </location>
    <ligand>
        <name>Mg(2+)</name>
        <dbReference type="ChEBI" id="CHEBI:18420"/>
    </ligand>
</feature>
<feature type="binding site" evidence="1">
    <location>
        <begin position="566"/>
        <end position="567"/>
    </location>
    <ligand>
        <name>phosphoenolpyruvate</name>
        <dbReference type="ChEBI" id="CHEBI:58702"/>
    </ligand>
</feature>
<feature type="binding site" evidence="1">
    <location>
        <position position="567"/>
    </location>
    <ligand>
        <name>Mg(2+)</name>
        <dbReference type="ChEBI" id="CHEBI:18420"/>
    </ligand>
</feature>
<feature type="binding site" evidence="3">
    <location>
        <position position="577"/>
    </location>
    <ligand>
        <name>phosphoenolpyruvate</name>
        <dbReference type="ChEBI" id="CHEBI:58702"/>
    </ligand>
</feature>
<feature type="modified residue" description="Phosphohistidine; by EI" evidence="8">
    <location>
        <position position="16"/>
    </location>
</feature>
<feature type="modified residue" description="Phosphohistidine; by autocatalysis" evidence="8">
    <location>
        <position position="301"/>
    </location>
</feature>
<feature type="modified residue" description="Phosphohistidine; by HPr" evidence="8">
    <location>
        <position position="750"/>
    </location>
</feature>
<accession>P32670</accession>
<accession>Q2M8P3</accession>
<reference key="1">
    <citation type="journal article" date="1993" name="Nucleic Acids Res.">
        <title>Analysis of the Escherichia coli genome. IV. DNA sequence of the region from 89.2 to 92.8 minutes.</title>
        <authorList>
            <person name="Blattner F.R."/>
            <person name="Burland V.D."/>
            <person name="Plunkett G. III"/>
            <person name="Sofia H.J."/>
            <person name="Daniels D.L."/>
        </authorList>
    </citation>
    <scope>NUCLEOTIDE SEQUENCE [LARGE SCALE GENOMIC DNA]</scope>
    <source>
        <strain>K12 / MG1655 / ATCC 47076</strain>
    </source>
</reference>
<reference key="2">
    <citation type="journal article" date="1997" name="Science">
        <title>The complete genome sequence of Escherichia coli K-12.</title>
        <authorList>
            <person name="Blattner F.R."/>
            <person name="Plunkett G. III"/>
            <person name="Bloch C.A."/>
            <person name="Perna N.T."/>
            <person name="Burland V."/>
            <person name="Riley M."/>
            <person name="Collado-Vides J."/>
            <person name="Glasner J.D."/>
            <person name="Rode C.K."/>
            <person name="Mayhew G.F."/>
            <person name="Gregor J."/>
            <person name="Davis N.W."/>
            <person name="Kirkpatrick H.A."/>
            <person name="Goeden M.A."/>
            <person name="Rose D.J."/>
            <person name="Mau B."/>
            <person name="Shao Y."/>
        </authorList>
    </citation>
    <scope>NUCLEOTIDE SEQUENCE [LARGE SCALE GENOMIC DNA]</scope>
    <source>
        <strain>K12 / MG1655 / ATCC 47076</strain>
    </source>
</reference>
<reference key="3">
    <citation type="journal article" date="2006" name="Nucleic Acids Res.">
        <title>Escherichia coli K-12: a cooperatively developed annotation snapshot -- 2005.</title>
        <authorList>
            <person name="Riley M."/>
            <person name="Abe T."/>
            <person name="Arnaud M.B."/>
            <person name="Berlyn M.K.B."/>
            <person name="Blattner F.R."/>
            <person name="Chaudhuri R.R."/>
            <person name="Glasner J.D."/>
            <person name="Horiuchi T."/>
            <person name="Keseler I.M."/>
            <person name="Kosuge T."/>
            <person name="Mori H."/>
            <person name="Perna N.T."/>
            <person name="Plunkett G. III"/>
            <person name="Rudd K.E."/>
            <person name="Serres M.H."/>
            <person name="Thomas G.H."/>
            <person name="Thomson N.R."/>
            <person name="Wishart D."/>
            <person name="Wanner B.L."/>
        </authorList>
    </citation>
    <scope>SEQUENCE REVISION</scope>
</reference>
<reference key="4">
    <citation type="journal article" date="2006" name="Mol. Syst. Biol.">
        <title>Highly accurate genome sequences of Escherichia coli K-12 strains MG1655 and W3110.</title>
        <authorList>
            <person name="Hayashi K."/>
            <person name="Morooka N."/>
            <person name="Yamamoto Y."/>
            <person name="Fujita K."/>
            <person name="Isono K."/>
            <person name="Choi S."/>
            <person name="Ohtsubo E."/>
            <person name="Baba T."/>
            <person name="Wanner B.L."/>
            <person name="Mori H."/>
            <person name="Horiuchi T."/>
        </authorList>
    </citation>
    <scope>NUCLEOTIDE SEQUENCE [LARGE SCALE GENOMIC DNA]</scope>
    <source>
        <strain>K12 / W3110 / ATCC 27325 / DSM 5911</strain>
    </source>
</reference>
<reference key="5">
    <citation type="journal article" date="1995" name="Microbiology">
        <title>Novel phosphotransferase system genes revealed by bacterial genome analysis -- a gene cluster encoding a unique Enzyme I and the proteins of a fructose-like permease system.</title>
        <authorList>
            <person name="Reizer J."/>
            <person name="Reizer A."/>
            <person name="Saier M.H. Jr."/>
        </authorList>
    </citation>
    <scope>DISCUSSION OF SEQUENCE</scope>
    <scope>FUNCTION</scope>
</reference>
<evidence type="ECO:0000250" key="1">
    <source>
        <dbReference type="UniProtKB" id="P08839"/>
    </source>
</evidence>
<evidence type="ECO:0000250" key="2">
    <source>
        <dbReference type="UniProtKB" id="P20966"/>
    </source>
</evidence>
<evidence type="ECO:0000250" key="3">
    <source>
        <dbReference type="UniProtKB" id="P23533"/>
    </source>
</evidence>
<evidence type="ECO:0000250" key="4">
    <source>
        <dbReference type="UniProtKB" id="P77439"/>
    </source>
</evidence>
<evidence type="ECO:0000255" key="5">
    <source>
        <dbReference type="PROSITE-ProRule" id="PRU00417"/>
    </source>
</evidence>
<evidence type="ECO:0000255" key="6">
    <source>
        <dbReference type="PROSITE-ProRule" id="PRU00681"/>
    </source>
</evidence>
<evidence type="ECO:0000303" key="7">
    <source>
    </source>
</evidence>
<evidence type="ECO:0000305" key="8"/>
<evidence type="ECO:0000305" key="9">
    <source>
    </source>
</evidence>